<organism>
    <name type="scientific">Pseudomonas putida (strain ATCC 47054 / DSM 6125 / CFBP 8728 / NCIMB 11950 / KT2440)</name>
    <dbReference type="NCBI Taxonomy" id="160488"/>
    <lineage>
        <taxon>Bacteria</taxon>
        <taxon>Pseudomonadati</taxon>
        <taxon>Pseudomonadota</taxon>
        <taxon>Gammaproteobacteria</taxon>
        <taxon>Pseudomonadales</taxon>
        <taxon>Pseudomonadaceae</taxon>
        <taxon>Pseudomonas</taxon>
    </lineage>
</organism>
<reference key="1">
    <citation type="journal article" date="2002" name="Environ. Microbiol.">
        <title>Complete genome sequence and comparative analysis of the metabolically versatile Pseudomonas putida KT2440.</title>
        <authorList>
            <person name="Nelson K.E."/>
            <person name="Weinel C."/>
            <person name="Paulsen I.T."/>
            <person name="Dodson R.J."/>
            <person name="Hilbert H."/>
            <person name="Martins dos Santos V.A.P."/>
            <person name="Fouts D.E."/>
            <person name="Gill S.R."/>
            <person name="Pop M."/>
            <person name="Holmes M."/>
            <person name="Brinkac L.M."/>
            <person name="Beanan M.J."/>
            <person name="DeBoy R.T."/>
            <person name="Daugherty S.C."/>
            <person name="Kolonay J.F."/>
            <person name="Madupu R."/>
            <person name="Nelson W.C."/>
            <person name="White O."/>
            <person name="Peterson J.D."/>
            <person name="Khouri H.M."/>
            <person name="Hance I."/>
            <person name="Chris Lee P."/>
            <person name="Holtzapple E.K."/>
            <person name="Scanlan D."/>
            <person name="Tran K."/>
            <person name="Moazzez A."/>
            <person name="Utterback T.R."/>
            <person name="Rizzo M."/>
            <person name="Lee K."/>
            <person name="Kosack D."/>
            <person name="Moestl D."/>
            <person name="Wedler H."/>
            <person name="Lauber J."/>
            <person name="Stjepandic D."/>
            <person name="Hoheisel J."/>
            <person name="Straetz M."/>
            <person name="Heim S."/>
            <person name="Kiewitz C."/>
            <person name="Eisen J.A."/>
            <person name="Timmis K.N."/>
            <person name="Duesterhoeft A."/>
            <person name="Tuemmler B."/>
            <person name="Fraser C.M."/>
        </authorList>
    </citation>
    <scope>NUCLEOTIDE SEQUENCE [LARGE SCALE GENOMIC DNA]</scope>
    <source>
        <strain>ATCC 47054 / DSM 6125 / CFBP 8728 / NCIMB 11950 / KT2440</strain>
    </source>
</reference>
<proteinExistence type="inferred from homology"/>
<sequence length="387" mass="40005">MTVLKMTDLDLQGKRVLIREDLNVPVKDGVVASDARILAALPTIKLALEKGAAVMVCSHLGRPTEGEFSAENSLKPVADYLSKALGRDVPLVADYLDGVAVQAGELVLFENVRFNKGEKKNADELAQKYAALCDVFVMDAFGTAHRAEGSTHGVAKFAKVAAAGPLLAAELDALGKALKAPAKPMAAIVAGSKVSTKLDVLNSLSSVCDQLIVGGGIANTFLAAAGHPVGKSLYEPDLVDTAKAIAAKVSVPLPVDVVVAKEFAESAEATVKAIADVAADDMILDIGPQTAANFAELLKSSKTILWNGPVGVFEFDQFGNGTKVLAKAIADSAAFSIAGGGDTLAAIDKYGVSKEISYISTGGGAFLEFVEGKVLPAVAILEERAKA</sequence>
<keyword id="KW-0067">ATP-binding</keyword>
<keyword id="KW-0963">Cytoplasm</keyword>
<keyword id="KW-0324">Glycolysis</keyword>
<keyword id="KW-0418">Kinase</keyword>
<keyword id="KW-0547">Nucleotide-binding</keyword>
<keyword id="KW-1185">Reference proteome</keyword>
<keyword id="KW-0808">Transferase</keyword>
<feature type="chain" id="PRO_0000145989" description="Phosphoglycerate kinase">
    <location>
        <begin position="1"/>
        <end position="387"/>
    </location>
</feature>
<feature type="binding site" evidence="1">
    <location>
        <begin position="21"/>
        <end position="23"/>
    </location>
    <ligand>
        <name>substrate</name>
    </ligand>
</feature>
<feature type="binding site" evidence="1">
    <location>
        <position position="36"/>
    </location>
    <ligand>
        <name>substrate</name>
    </ligand>
</feature>
<feature type="binding site" evidence="1">
    <location>
        <begin position="59"/>
        <end position="62"/>
    </location>
    <ligand>
        <name>substrate</name>
    </ligand>
</feature>
<feature type="binding site" evidence="1">
    <location>
        <position position="113"/>
    </location>
    <ligand>
        <name>substrate</name>
    </ligand>
</feature>
<feature type="binding site" evidence="1">
    <location>
        <position position="146"/>
    </location>
    <ligand>
        <name>substrate</name>
    </ligand>
</feature>
<feature type="binding site" evidence="1">
    <location>
        <position position="197"/>
    </location>
    <ligand>
        <name>ATP</name>
        <dbReference type="ChEBI" id="CHEBI:30616"/>
    </ligand>
</feature>
<feature type="binding site" evidence="1">
    <location>
        <position position="314"/>
    </location>
    <ligand>
        <name>ATP</name>
        <dbReference type="ChEBI" id="CHEBI:30616"/>
    </ligand>
</feature>
<feature type="binding site" evidence="1">
    <location>
        <begin position="340"/>
        <end position="343"/>
    </location>
    <ligand>
        <name>ATP</name>
        <dbReference type="ChEBI" id="CHEBI:30616"/>
    </ligand>
</feature>
<dbReference type="EC" id="2.7.2.3" evidence="1"/>
<dbReference type="EMBL" id="AE015451">
    <property type="protein sequence ID" value="AAN70530.1"/>
    <property type="molecule type" value="Genomic_DNA"/>
</dbReference>
<dbReference type="RefSeq" id="NP_747066.1">
    <property type="nucleotide sequence ID" value="NC_002947.4"/>
</dbReference>
<dbReference type="RefSeq" id="WP_010955537.1">
    <property type="nucleotide sequence ID" value="NZ_CP169744.1"/>
</dbReference>
<dbReference type="SMR" id="Q88D64"/>
<dbReference type="STRING" id="160488.PP_4963"/>
<dbReference type="PaxDb" id="160488-PP_4963"/>
<dbReference type="KEGG" id="ppu:PP_4963"/>
<dbReference type="PATRIC" id="fig|160488.4.peg.5299"/>
<dbReference type="eggNOG" id="COG0126">
    <property type="taxonomic scope" value="Bacteria"/>
</dbReference>
<dbReference type="HOGENOM" id="CLU_025427_0_2_6"/>
<dbReference type="OrthoDB" id="9808460at2"/>
<dbReference type="PhylomeDB" id="Q88D64"/>
<dbReference type="BioCyc" id="PPUT160488:G1G01-5307-MONOMER"/>
<dbReference type="UniPathway" id="UPA00109">
    <property type="reaction ID" value="UER00185"/>
</dbReference>
<dbReference type="Proteomes" id="UP000000556">
    <property type="component" value="Chromosome"/>
</dbReference>
<dbReference type="GO" id="GO:0005829">
    <property type="term" value="C:cytosol"/>
    <property type="evidence" value="ECO:0007669"/>
    <property type="project" value="TreeGrafter"/>
</dbReference>
<dbReference type="GO" id="GO:0043531">
    <property type="term" value="F:ADP binding"/>
    <property type="evidence" value="ECO:0007669"/>
    <property type="project" value="TreeGrafter"/>
</dbReference>
<dbReference type="GO" id="GO:0005524">
    <property type="term" value="F:ATP binding"/>
    <property type="evidence" value="ECO:0007669"/>
    <property type="project" value="UniProtKB-KW"/>
</dbReference>
<dbReference type="GO" id="GO:0004618">
    <property type="term" value="F:phosphoglycerate kinase activity"/>
    <property type="evidence" value="ECO:0007669"/>
    <property type="project" value="UniProtKB-UniRule"/>
</dbReference>
<dbReference type="GO" id="GO:0006094">
    <property type="term" value="P:gluconeogenesis"/>
    <property type="evidence" value="ECO:0007669"/>
    <property type="project" value="TreeGrafter"/>
</dbReference>
<dbReference type="GO" id="GO:0006096">
    <property type="term" value="P:glycolytic process"/>
    <property type="evidence" value="ECO:0007669"/>
    <property type="project" value="UniProtKB-UniRule"/>
</dbReference>
<dbReference type="FunFam" id="3.40.50.1260:FF:000001">
    <property type="entry name" value="Phosphoglycerate kinase"/>
    <property type="match status" value="1"/>
</dbReference>
<dbReference type="FunFam" id="3.40.50.1260:FF:000002">
    <property type="entry name" value="Phosphoglycerate kinase"/>
    <property type="match status" value="1"/>
</dbReference>
<dbReference type="Gene3D" id="3.40.50.1260">
    <property type="entry name" value="Phosphoglycerate kinase, N-terminal domain"/>
    <property type="match status" value="2"/>
</dbReference>
<dbReference type="HAMAP" id="MF_00145">
    <property type="entry name" value="Phosphoglyc_kinase"/>
    <property type="match status" value="1"/>
</dbReference>
<dbReference type="InterPro" id="IPR001576">
    <property type="entry name" value="Phosphoglycerate_kinase"/>
</dbReference>
<dbReference type="InterPro" id="IPR015911">
    <property type="entry name" value="Phosphoglycerate_kinase_CS"/>
</dbReference>
<dbReference type="InterPro" id="IPR015824">
    <property type="entry name" value="Phosphoglycerate_kinase_N"/>
</dbReference>
<dbReference type="InterPro" id="IPR036043">
    <property type="entry name" value="Phosphoglycerate_kinase_sf"/>
</dbReference>
<dbReference type="PANTHER" id="PTHR11406">
    <property type="entry name" value="PHOSPHOGLYCERATE KINASE"/>
    <property type="match status" value="1"/>
</dbReference>
<dbReference type="PANTHER" id="PTHR11406:SF23">
    <property type="entry name" value="PHOSPHOGLYCERATE KINASE 1, CHLOROPLASTIC-RELATED"/>
    <property type="match status" value="1"/>
</dbReference>
<dbReference type="Pfam" id="PF00162">
    <property type="entry name" value="PGK"/>
    <property type="match status" value="1"/>
</dbReference>
<dbReference type="PIRSF" id="PIRSF000724">
    <property type="entry name" value="Pgk"/>
    <property type="match status" value="1"/>
</dbReference>
<dbReference type="PRINTS" id="PR00477">
    <property type="entry name" value="PHGLYCKINASE"/>
</dbReference>
<dbReference type="SUPFAM" id="SSF53748">
    <property type="entry name" value="Phosphoglycerate kinase"/>
    <property type="match status" value="1"/>
</dbReference>
<dbReference type="PROSITE" id="PS00111">
    <property type="entry name" value="PGLYCERATE_KINASE"/>
    <property type="match status" value="1"/>
</dbReference>
<gene>
    <name evidence="1" type="primary">pgk</name>
    <name type="ordered locus">PP_4963</name>
</gene>
<accession>Q88D64</accession>
<name>PGK_PSEPK</name>
<comment type="catalytic activity">
    <reaction evidence="1">
        <text>(2R)-3-phosphoglycerate + ATP = (2R)-3-phospho-glyceroyl phosphate + ADP</text>
        <dbReference type="Rhea" id="RHEA:14801"/>
        <dbReference type="ChEBI" id="CHEBI:30616"/>
        <dbReference type="ChEBI" id="CHEBI:57604"/>
        <dbReference type="ChEBI" id="CHEBI:58272"/>
        <dbReference type="ChEBI" id="CHEBI:456216"/>
        <dbReference type="EC" id="2.7.2.3"/>
    </reaction>
</comment>
<comment type="pathway">
    <text evidence="1">Carbohydrate degradation; glycolysis; pyruvate from D-glyceraldehyde 3-phosphate: step 2/5.</text>
</comment>
<comment type="subunit">
    <text evidence="1">Monomer.</text>
</comment>
<comment type="subcellular location">
    <subcellularLocation>
        <location evidence="1">Cytoplasm</location>
    </subcellularLocation>
</comment>
<comment type="similarity">
    <text evidence="1">Belongs to the phosphoglycerate kinase family.</text>
</comment>
<evidence type="ECO:0000255" key="1">
    <source>
        <dbReference type="HAMAP-Rule" id="MF_00145"/>
    </source>
</evidence>
<protein>
    <recommendedName>
        <fullName evidence="1">Phosphoglycerate kinase</fullName>
        <ecNumber evidence="1">2.7.2.3</ecNumber>
    </recommendedName>
</protein>